<evidence type="ECO:0000250" key="1">
    <source>
        <dbReference type="UniProtKB" id="P0DSP2"/>
    </source>
</evidence>
<evidence type="ECO:0000269" key="2">
    <source>
    </source>
</evidence>
<evidence type="ECO:0000303" key="3">
    <source>
    </source>
</evidence>
<evidence type="ECO:0000303" key="4">
    <source>
    </source>
</evidence>
<evidence type="ECO:0000305" key="5">
    <source>
    </source>
</evidence>
<evidence type="ECO:0000305" key="6">
    <source>
    </source>
</evidence>
<evidence type="ECO:0000312" key="7">
    <source>
        <dbReference type="EMBL" id="AKS70342.1"/>
    </source>
</evidence>
<accession>P0DXA6</accession>
<feature type="chain" id="PRO_0000459831" description="Cyclic GMP-AMP synthase CdnE03">
    <location>
        <begin position="1"/>
        <end position="324"/>
    </location>
</feature>
<feature type="binding site" evidence="1">
    <location>
        <position position="87"/>
    </location>
    <ligand>
        <name>Mg(2+)</name>
        <dbReference type="ChEBI" id="CHEBI:18420"/>
    </ligand>
</feature>
<feature type="binding site" evidence="1">
    <location>
        <position position="89"/>
    </location>
    <ligand>
        <name>ATP</name>
        <dbReference type="ChEBI" id="CHEBI:30616"/>
    </ligand>
</feature>
<feature type="binding site" evidence="1">
    <location>
        <position position="89"/>
    </location>
    <ligand>
        <name>Mg(2+)</name>
        <dbReference type="ChEBI" id="CHEBI:18420"/>
    </ligand>
</feature>
<feature type="binding site" evidence="1">
    <location>
        <begin position="144"/>
        <end position="145"/>
    </location>
    <ligand>
        <name>ATP</name>
        <dbReference type="ChEBI" id="CHEBI:30616"/>
    </ligand>
</feature>
<feature type="binding site" evidence="1">
    <location>
        <position position="159"/>
    </location>
    <ligand>
        <name>ATP</name>
        <dbReference type="ChEBI" id="CHEBI:30616"/>
    </ligand>
</feature>
<feature type="binding site" evidence="1">
    <location>
        <position position="159"/>
    </location>
    <ligand>
        <name>Mg(2+)</name>
        <dbReference type="ChEBI" id="CHEBI:18420"/>
    </ligand>
</feature>
<feature type="binding site" evidence="1">
    <location>
        <position position="224"/>
    </location>
    <ligand>
        <name>GTP</name>
        <dbReference type="ChEBI" id="CHEBI:37565"/>
    </ligand>
</feature>
<feature type="binding site" evidence="1">
    <location>
        <position position="243"/>
    </location>
    <ligand>
        <name>GTP</name>
        <dbReference type="ChEBI" id="CHEBI:37565"/>
    </ligand>
</feature>
<feature type="mutagenesis site" description="Does not make cyclic 3',2'-cGAMP (3',2'-cGAMP), does not bind cabRNA, does not protect against phage." evidence="2">
    <original>K</original>
    <variation>E</variation>
    <location>
        <position position="9"/>
    </location>
</feature>
<feature type="mutagenesis site" description="Substantially reduces synthesis of 3',2'-cGAMP, weakly binds cabRNA, reduced protection against phage." evidence="2">
    <original>K</original>
    <variation>E</variation>
    <location>
        <position position="13"/>
    </location>
</feature>
<feature type="mutagenesis site" description="Does not protect against phage, does not make 3',2'-cGAMP." evidence="2">
    <original>DVD</original>
    <variation>AVA</variation>
    <location>
        <begin position="87"/>
        <end position="89"/>
    </location>
</feature>
<dbReference type="EC" id="2.7.7.-" evidence="2"/>
<dbReference type="EMBL" id="CP009762">
    <property type="protein sequence ID" value="AKS70342.1"/>
    <property type="molecule type" value="Genomic_DNA"/>
</dbReference>
<dbReference type="SMR" id="P0DXA6"/>
<dbReference type="KEGG" id="sscz:RN70_00380"/>
<dbReference type="GO" id="GO:0005524">
    <property type="term" value="F:ATP binding"/>
    <property type="evidence" value="ECO:0007669"/>
    <property type="project" value="UniProtKB-KW"/>
</dbReference>
<dbReference type="GO" id="GO:0005525">
    <property type="term" value="F:GTP binding"/>
    <property type="evidence" value="ECO:0007669"/>
    <property type="project" value="UniProtKB-KW"/>
</dbReference>
<dbReference type="GO" id="GO:0046872">
    <property type="term" value="F:metal ion binding"/>
    <property type="evidence" value="ECO:0007669"/>
    <property type="project" value="UniProtKB-KW"/>
</dbReference>
<dbReference type="GO" id="GO:0016779">
    <property type="term" value="F:nucleotidyltransferase activity"/>
    <property type="evidence" value="ECO:0007669"/>
    <property type="project" value="UniProtKB-KW"/>
</dbReference>
<dbReference type="GO" id="GO:0003723">
    <property type="term" value="F:RNA binding"/>
    <property type="evidence" value="ECO:0007669"/>
    <property type="project" value="UniProtKB-KW"/>
</dbReference>
<dbReference type="GO" id="GO:0051607">
    <property type="term" value="P:defense response to virus"/>
    <property type="evidence" value="ECO:0007669"/>
    <property type="project" value="UniProtKB-KW"/>
</dbReference>
<dbReference type="CDD" id="cd05400">
    <property type="entry name" value="NT_2-5OAS_ClassI-CCAase"/>
    <property type="match status" value="1"/>
</dbReference>
<dbReference type="Gene3D" id="3.30.460.10">
    <property type="entry name" value="Beta Polymerase, domain 2"/>
    <property type="match status" value="1"/>
</dbReference>
<dbReference type="InterPro" id="IPR006116">
    <property type="entry name" value="NT_2-5OAS_ClassI-CCAase"/>
</dbReference>
<dbReference type="InterPro" id="IPR043519">
    <property type="entry name" value="NT_sf"/>
</dbReference>
<dbReference type="InterPro" id="IPR002934">
    <property type="entry name" value="Polymerase_NTP_transf_dom"/>
</dbReference>
<dbReference type="Pfam" id="PF01909">
    <property type="entry name" value="NTP_transf_2"/>
    <property type="match status" value="1"/>
</dbReference>
<dbReference type="SUPFAM" id="SSF81301">
    <property type="entry name" value="Nucleotidyltransferase"/>
    <property type="match status" value="1"/>
</dbReference>
<protein>
    <recommendedName>
        <fullName evidence="4">Cyclic GMP-AMP synthase CdnE03</fullName>
        <shortName evidence="4">Ssc-CdnE03</shortName>
        <ecNumber evidence="2">2.7.7.-</ecNumber>
    </recommendedName>
    <alternativeName>
        <fullName evidence="4">cGAS/DncV-like nucleotidyltransferase</fullName>
        <shortName evidence="4">CD-NTase057</shortName>
    </alternativeName>
</protein>
<name>CDNE_STASC</name>
<sequence length="324" mass="38298">MLFTEEQLKLYSKPLSESEKEKCENAIRIIQESLESLGYETKKGIHRNNEDTLSYQIKMTNPSKDYELSIFVKGSYATNTNVRQNSDVDIAVVKESEFFDKYREGKTRENYKFVSSNKPPYHFKDEVEEALIERFGRSEVRRGNKAIRINGNTYRKETDCVPCFRYRDYSNDYMDDPNNFIGGITIYSDKGERIINYPEQHINNSVIKNNNTNYKYKKMVRIIKEIRYQLIDSKNENAKQTSSFGVEGLFWNIPDYKYSNDEMLGDTFNALIAFLIDNIDKLREFKEPNDILNLCDSQEKNNVYKNFILDVKNYFEYSGEKKYE</sequence>
<proteinExistence type="evidence at protein level"/>
<keyword id="KW-0051">Antiviral defense</keyword>
<keyword id="KW-0067">ATP-binding</keyword>
<keyword id="KW-0342">GTP-binding</keyword>
<keyword id="KW-0945">Host-virus interaction</keyword>
<keyword id="KW-0460">Magnesium</keyword>
<keyword id="KW-0479">Metal-binding</keyword>
<keyword id="KW-0547">Nucleotide-binding</keyword>
<keyword id="KW-0548">Nucleotidyltransferase</keyword>
<keyword id="KW-0694">RNA-binding</keyword>
<keyword id="KW-0808">Transferase</keyword>
<organism>
    <name type="scientific">Staphylococcus schleiferi</name>
    <dbReference type="NCBI Taxonomy" id="1295"/>
    <lineage>
        <taxon>Bacteria</taxon>
        <taxon>Bacillati</taxon>
        <taxon>Bacillota</taxon>
        <taxon>Bacilli</taxon>
        <taxon>Bacillales</taxon>
        <taxon>Staphylococcaceae</taxon>
        <taxon>Staphylococcus</taxon>
    </lineage>
</organism>
<comment type="function">
    <text evidence="2 3">Cyclic nucleotide synthase (second messenger synthase) of a CBASS antivirus system (PubMed:37968393). CBASS (cyclic oligonucleotide-based antiphage signaling system) provides immunity against bacteriophage (PubMed:37968393). The CD-NTase protein synthesizes cyclic nucleotides in response to infection; these serve as specific second messenger signals (PubMed:37968393). The signals activate a diverse range of effectors, leading to bacterial cell death and thus abortive phage infection (PubMed:37968393). The effector for this system is downstream Cap15 (PubMed:37968393). A type I-B CBASS system (PubMed:32839535).</text>
</comment>
<comment type="function">
    <text evidence="2">Cyclic dinucleotide synthase that catalyzes the synthesis of 3',2'-cyclic GMP-AMP (cGAMP) from GTP and ATP upon activation by viral-derived cabRNA (PubMed:37968393). Binds cabRNA via positive charges in its N-terminus (PubMed:37968393).</text>
</comment>
<comment type="function">
    <text evidence="2">Protects S.aureus against phage infection. When the CBASS operon (cdnE-cap15) is introduced in S.aureus strain RN4220 there is strong protection against lytic DNA phages 80alpha-vir and phi-NM1-gamma-6 but little to no protection against phages phi-NM4-gamma-4 or phi-12-gamma-3 (PubMed:37968393).</text>
</comment>
<comment type="catalytic activity">
    <reaction evidence="2">
        <text>GTP + ATP = 3',2'-cGAMP + 2 diphosphate</text>
        <dbReference type="Rhea" id="RHEA:68344"/>
        <dbReference type="ChEBI" id="CHEBI:30616"/>
        <dbReference type="ChEBI" id="CHEBI:33019"/>
        <dbReference type="ChEBI" id="CHEBI:37565"/>
        <dbReference type="ChEBI" id="CHEBI:177334"/>
    </reaction>
    <physiologicalReaction direction="left-to-right" evidence="2">
        <dbReference type="Rhea" id="RHEA:68345"/>
    </physiologicalReaction>
</comment>
<comment type="cofactor">
    <cofactor evidence="1">
        <name>Mg(2+)</name>
        <dbReference type="ChEBI" id="CHEBI:18420"/>
    </cofactor>
    <text evidence="1">Binds 1 Mg(2+) ion per subunit.</text>
</comment>
<comment type="activity regulation">
    <text evidence="2">Activated by a virus-derived, approximately 400 nucleotide RNA (called CBASS-activating bacteriophage RNA, cabRNA) that begins in the viral terminase subunit terS and extends into terL (PubMed:37968393). RNA secondary and/or tertiary structure, as well as viral infection itself, are important for CdnE activation (PubMed:37968393). A much longer RNA (escaper RNA) with a different secondary structure, derived from a terS-mutated virus still binds to this protein, but does not activate its nucleotide cyclase activity (PubMed:37968393). Shorter viral-derived RNAs (34 and 49 nt) with extensive predicted secondary structure also activate the enzyme, although not as well as full-length cabRNA (PubMed:37968393).</text>
</comment>
<comment type="similarity">
    <text evidence="5 6">Belongs to the CD-NTase family. E03 subfamily.</text>
</comment>
<reference evidence="7" key="1">
    <citation type="journal article" date="2015" name="Genome Announc.">
        <title>Complete Genome Sequence and Methylome of Staphylococcus schleiferi, an Important Cause of Skin and Ear Infections in Veterinary Medicine.</title>
        <authorList>
            <person name="Misic A.M."/>
            <person name="Cain C.L."/>
            <person name="Morris D.O."/>
            <person name="Rankin S.C."/>
            <person name="Beiting D.P."/>
        </authorList>
    </citation>
    <scope>NUCLEOTIDE SEQUENCE [LARGE SCALE GENOMIC DNA]</scope>
    <source>
        <strain>2142-05</strain>
    </source>
</reference>
<reference key="2">
    <citation type="journal article" date="2019" name="Nature">
        <title>Bacterial cGAS-like enzymes synthesize diverse nucleotide signals.</title>
        <authorList>
            <person name="Whiteley A.T."/>
            <person name="Eaglesham J.B."/>
            <person name="de Oliveira Mann C.C."/>
            <person name="Morehouse B.R."/>
            <person name="Lowey B."/>
            <person name="Nieminen E.A."/>
            <person name="Danilchanka O."/>
            <person name="King D.S."/>
            <person name="Lee A.S.Y."/>
            <person name="Mekalanos J.J."/>
            <person name="Kranzusch P.J."/>
        </authorList>
    </citation>
    <scope>NOMENCLATURE</scope>
    <scope>SIMILARITY</scope>
</reference>
<reference key="3">
    <citation type="journal article" date="2020" name="Nat. Microbiol.">
        <title>Diversity and classification of cyclic-oligonucleotide-based anti-phage signalling systems.</title>
        <authorList>
            <person name="Millman A."/>
            <person name="Melamed S."/>
            <person name="Amitai G."/>
            <person name="Sorek R."/>
        </authorList>
    </citation>
    <scope>CLASSIFICATION AND NOMENCLATURE</scope>
</reference>
<reference key="4">
    <citation type="journal article" date="2023" name="Nature">
        <title>Bacterial cGAS senses a viral RNA to initiate immunity.</title>
        <authorList>
            <person name="Banh D.V."/>
            <person name="Roberts C.G."/>
            <person name="Morales-Amador A."/>
            <person name="Berryhill B.A."/>
            <person name="Chaudhry W."/>
            <person name="Levin B.R."/>
            <person name="Brady S.F."/>
            <person name="Marraffini L.A."/>
        </authorList>
    </citation>
    <scope>FUNCTION</scope>
    <scope>ANTIVIRAL DEFENSE</scope>
    <scope>CATALYTIC ACTIVITY</scope>
    <scope>ACTIVITY REGULATION</scope>
    <scope>RNA-BINDING</scope>
    <scope>MUTAGENESIS OF LYS-9; LYS-13 AND 87-ASP--ASP-89</scope>
    <source>
        <strain>2142-05</strain>
    </source>
</reference>
<gene>
    <name evidence="4" type="primary">cdnE</name>
    <name evidence="7" type="ORF">OA96_00210</name>
</gene>